<accession>Q22678</accession>
<gene>
    <name evidence="7" type="primary">sptf-2</name>
    <name evidence="7" type="ORF">T22C8.5</name>
</gene>
<protein>
    <recommendedName>
        <fullName evidence="7">Specificity protein transcription factor 2</fullName>
    </recommendedName>
</protein>
<sequence length="166" mass="18879">MDGAATKFFRPWESHGSYHHSLPSISPPDSPASTSASSSSSSIGANELTTKRRKCERCTCPNCKAIKHGDRGSQHTHLCSVPGCGKTYKKTSHLRAHLRKHTGDRPFVCDWFDCGKRFDRSDQLIRHKRTHTKEYRFACKFCIRQFSRSDHLQQHLTSVHNIVVVD</sequence>
<name>SPTF2_CAEEL</name>
<evidence type="ECO:0000250" key="1">
    <source>
        <dbReference type="UniProtKB" id="Q6BEB4"/>
    </source>
</evidence>
<evidence type="ECO:0000255" key="2">
    <source>
        <dbReference type="PROSITE-ProRule" id="PRU00042"/>
    </source>
</evidence>
<evidence type="ECO:0000256" key="3">
    <source>
        <dbReference type="SAM" id="MobiDB-lite"/>
    </source>
</evidence>
<evidence type="ECO:0000269" key="4">
    <source>
    </source>
</evidence>
<evidence type="ECO:0000305" key="5"/>
<evidence type="ECO:0000312" key="6">
    <source>
        <dbReference type="Proteomes" id="UP000001940"/>
    </source>
</evidence>
<evidence type="ECO:0000312" key="7">
    <source>
        <dbReference type="WormBase" id="T22C8.5"/>
    </source>
</evidence>
<comment type="function">
    <text evidence="1 4">Transcription factor (By similarity). Probably acts downstream of the Wnt signaling pathway (PubMed:24569038).</text>
</comment>
<comment type="interaction">
    <interactant intactId="EBI-2420648">
        <id>Q22678</id>
    </interactant>
    <interactant intactId="EBI-314716">
        <id>O02482</id>
        <label>unc-37</label>
    </interactant>
    <organismsDiffer>false</organismsDiffer>
    <experiments>5</experiments>
</comment>
<comment type="developmental stage">
    <text evidence="4">Expressed during the larval L1 to adult stages, with little or no change in transcript levels (PubMed:24569038). Expressed in several head neurons during L4 larval stage in hermaphrodites (PubMed:24569038).</text>
</comment>
<comment type="disruption phenotype">
    <text evidence="4">RNAi-mediated knockdown causes hypodermal or cuticular rupture, typically in the anterior body region (PubMed:24569038). Abnormal gap between the outer layer of hypodermis and muscle and the internal organs, perhaps due to defects in cuticle integrity (PubMed:24569038).</text>
</comment>
<comment type="similarity">
    <text evidence="5">Belongs to the Sp1 C2H2-type zinc-finger protein family.</text>
</comment>
<proteinExistence type="evidence at protein level"/>
<feature type="chain" id="PRO_0000455701" description="Specificity protein transcription factor 2">
    <location>
        <begin position="1"/>
        <end position="166"/>
    </location>
</feature>
<feature type="zinc finger region" description="C2H2-type 1" evidence="2">
    <location>
        <begin position="77"/>
        <end position="101"/>
    </location>
</feature>
<feature type="zinc finger region" description="C2H2-type 2" evidence="2">
    <location>
        <begin position="107"/>
        <end position="131"/>
    </location>
</feature>
<feature type="zinc finger region" description="C2H2-type 3" evidence="2">
    <location>
        <begin position="137"/>
        <end position="160"/>
    </location>
</feature>
<feature type="region of interest" description="Disordered" evidence="3">
    <location>
        <begin position="17"/>
        <end position="45"/>
    </location>
</feature>
<feature type="compositionally biased region" description="Low complexity" evidence="3">
    <location>
        <begin position="31"/>
        <end position="42"/>
    </location>
</feature>
<dbReference type="EMBL" id="BX284602">
    <property type="protein sequence ID" value="CAA88877.1"/>
    <property type="molecule type" value="Genomic_DNA"/>
</dbReference>
<dbReference type="PIR" id="T25118">
    <property type="entry name" value="T25118"/>
</dbReference>
<dbReference type="RefSeq" id="NP_495833.1">
    <property type="nucleotide sequence ID" value="NM_063432.2"/>
</dbReference>
<dbReference type="SMR" id="Q22678"/>
<dbReference type="IntAct" id="Q22678">
    <property type="interactions" value="4"/>
</dbReference>
<dbReference type="STRING" id="6239.T22C8.5.1"/>
<dbReference type="PaxDb" id="6239-T22C8.5"/>
<dbReference type="EnsemblMetazoa" id="T22C8.5.1">
    <property type="protein sequence ID" value="T22C8.5.1"/>
    <property type="gene ID" value="WBGene00011926"/>
</dbReference>
<dbReference type="GeneID" id="188733"/>
<dbReference type="KEGG" id="cel:CELE_T22C8.5"/>
<dbReference type="UCSC" id="T22C8.5">
    <property type="organism name" value="c. elegans"/>
</dbReference>
<dbReference type="AGR" id="WB:WBGene00011926"/>
<dbReference type="CTD" id="188733"/>
<dbReference type="WormBase" id="T22C8.5">
    <property type="protein sequence ID" value="CE02353"/>
    <property type="gene ID" value="WBGene00011926"/>
    <property type="gene designation" value="sptf-2"/>
</dbReference>
<dbReference type="eggNOG" id="KOG1721">
    <property type="taxonomic scope" value="Eukaryota"/>
</dbReference>
<dbReference type="GeneTree" id="ENSGT00940000160673"/>
<dbReference type="HOGENOM" id="CLU_098774_0_0_1"/>
<dbReference type="InParanoid" id="Q22678"/>
<dbReference type="OMA" id="THTKEYR"/>
<dbReference type="OrthoDB" id="6365676at2759"/>
<dbReference type="PhylomeDB" id="Q22678"/>
<dbReference type="PRO" id="PR:Q22678"/>
<dbReference type="Proteomes" id="UP000001940">
    <property type="component" value="Chromosome II"/>
</dbReference>
<dbReference type="Bgee" id="WBGene00011926">
    <property type="expression patterns" value="Expressed in larva and 2 other cell types or tissues"/>
</dbReference>
<dbReference type="GO" id="GO:0000981">
    <property type="term" value="F:DNA-binding transcription factor activity, RNA polymerase II-specific"/>
    <property type="evidence" value="ECO:0000318"/>
    <property type="project" value="GO_Central"/>
</dbReference>
<dbReference type="GO" id="GO:0000978">
    <property type="term" value="F:RNA polymerase II cis-regulatory region sequence-specific DNA binding"/>
    <property type="evidence" value="ECO:0000318"/>
    <property type="project" value="GO_Central"/>
</dbReference>
<dbReference type="GO" id="GO:0008270">
    <property type="term" value="F:zinc ion binding"/>
    <property type="evidence" value="ECO:0007669"/>
    <property type="project" value="UniProtKB-KW"/>
</dbReference>
<dbReference type="GO" id="GO:0060070">
    <property type="term" value="P:canonical Wnt signaling pathway"/>
    <property type="evidence" value="ECO:0000315"/>
    <property type="project" value="UniProtKB"/>
</dbReference>
<dbReference type="GO" id="GO:0006357">
    <property type="term" value="P:regulation of transcription by RNA polymerase II"/>
    <property type="evidence" value="ECO:0000318"/>
    <property type="project" value="GO_Central"/>
</dbReference>
<dbReference type="FunFam" id="3.30.160.60:FF:000032">
    <property type="entry name" value="Krueppel-like factor 4"/>
    <property type="match status" value="1"/>
</dbReference>
<dbReference type="Gene3D" id="3.30.160.60">
    <property type="entry name" value="Classic Zinc Finger"/>
    <property type="match status" value="3"/>
</dbReference>
<dbReference type="InterPro" id="IPR036236">
    <property type="entry name" value="Znf_C2H2_sf"/>
</dbReference>
<dbReference type="InterPro" id="IPR013087">
    <property type="entry name" value="Znf_C2H2_type"/>
</dbReference>
<dbReference type="PANTHER" id="PTHR23235">
    <property type="entry name" value="KRUEPPEL-LIKE TRANSCRIPTION FACTOR"/>
    <property type="match status" value="1"/>
</dbReference>
<dbReference type="PANTHER" id="PTHR23235:SF168">
    <property type="entry name" value="SPECIFICITY PROTEIN TRANSCRIPTION FACTOR 2"/>
    <property type="match status" value="1"/>
</dbReference>
<dbReference type="Pfam" id="PF00096">
    <property type="entry name" value="zf-C2H2"/>
    <property type="match status" value="2"/>
</dbReference>
<dbReference type="SMART" id="SM00355">
    <property type="entry name" value="ZnF_C2H2"/>
    <property type="match status" value="3"/>
</dbReference>
<dbReference type="SUPFAM" id="SSF57667">
    <property type="entry name" value="beta-beta-alpha zinc fingers"/>
    <property type="match status" value="2"/>
</dbReference>
<dbReference type="PROSITE" id="PS00028">
    <property type="entry name" value="ZINC_FINGER_C2H2_1"/>
    <property type="match status" value="3"/>
</dbReference>
<dbReference type="PROSITE" id="PS50157">
    <property type="entry name" value="ZINC_FINGER_C2H2_2"/>
    <property type="match status" value="3"/>
</dbReference>
<organism evidence="6">
    <name type="scientific">Caenorhabditis elegans</name>
    <dbReference type="NCBI Taxonomy" id="6239"/>
    <lineage>
        <taxon>Eukaryota</taxon>
        <taxon>Metazoa</taxon>
        <taxon>Ecdysozoa</taxon>
        <taxon>Nematoda</taxon>
        <taxon>Chromadorea</taxon>
        <taxon>Rhabditida</taxon>
        <taxon>Rhabditina</taxon>
        <taxon>Rhabditomorpha</taxon>
        <taxon>Rhabditoidea</taxon>
        <taxon>Rhabditidae</taxon>
        <taxon>Peloderinae</taxon>
        <taxon>Caenorhabditis</taxon>
    </lineage>
</organism>
<keyword id="KW-0479">Metal-binding</keyword>
<keyword id="KW-1185">Reference proteome</keyword>
<keyword id="KW-0677">Repeat</keyword>
<keyword id="KW-0804">Transcription</keyword>
<keyword id="KW-0805">Transcription regulation</keyword>
<keyword id="KW-0862">Zinc</keyword>
<keyword id="KW-0863">Zinc-finger</keyword>
<reference evidence="6" key="1">
    <citation type="journal article" date="1998" name="Science">
        <title>Genome sequence of the nematode C. elegans: a platform for investigating biology.</title>
        <authorList>
            <consortium name="The C. elegans sequencing consortium"/>
        </authorList>
    </citation>
    <scope>NUCLEOTIDE SEQUENCE [LARGE SCALE GENOMIC DNA]</scope>
    <source>
        <strain evidence="6">Bristol N2</strain>
    </source>
</reference>
<reference evidence="5" key="2">
    <citation type="journal article" date="2014" name="G3 (Bethesda)">
        <title>Use of an activated beta-catenin to identify Wnt pathway target genes in caenorhabditis elegans, including a subset of collagen genes expressed in late larval development.</title>
        <authorList>
            <person name="Jackson B.M."/>
            <person name="Abete-Luzi P."/>
            <person name="Krause M.W."/>
            <person name="Eisenmann D.M."/>
        </authorList>
    </citation>
    <scope>FUNCTION</scope>
    <scope>DEVELOPMENTAL STAGE</scope>
    <scope>DISRUPTION PHENOTYPE</scope>
</reference>